<sequence length="216" mass="22483">MKNVAIVGDGGHGKVIRELINARSDTRLAAVLDDKFKTFEGGKEWYTGPPKAVTELRRLIPDVLFLIAVGNNSVRKQLAERLGLGKDDFITLIHPSAIVSKSAVIGEGTVIMAGAIIQADARIGAHCIINTGAVAEHDNQISDYVHLSPRATLSGAVSVQEGAHVGTGASVIPQIIIGAWSIVGAGSAVIRSIPDRVTAAGAPARIISSIQTSNKG</sequence>
<comment type="function">
    <text evidence="4">Catalyzes the conversion of UDP-2,4,6-trideoxy-2-acetamido-4-amino glucose to UDP-2,4,6-trideoxy-2,4-diacetamido glucose, commonly known as UDP-N,N'-diacetylbacillosamine (UDP-diNAcBac).</text>
</comment>
<comment type="catalytic activity">
    <reaction evidence="4">
        <text>UDP-N-acetylbacillosamine + acetyl-CoA = UDP-N,N'-diacetylbacillosamine + CoA + H(+)</text>
        <dbReference type="Rhea" id="RHEA:34159"/>
        <dbReference type="ChEBI" id="CHEBI:15378"/>
        <dbReference type="ChEBI" id="CHEBI:57287"/>
        <dbReference type="ChEBI" id="CHEBI:57288"/>
        <dbReference type="ChEBI" id="CHEBI:63277"/>
        <dbReference type="ChEBI" id="CHEBI:67134"/>
        <dbReference type="EC" id="2.3.1.203"/>
    </reaction>
</comment>
<comment type="biophysicochemical properties">
    <kinetics>
        <KM evidence="4">70.73 uM for UDP-N-acetylbacillosamine</KM>
    </kinetics>
</comment>
<comment type="subunit">
    <text evidence="4">Forms oligomers.</text>
</comment>
<comment type="induction">
    <text evidence="2">Repressed by SinR.</text>
</comment>
<comment type="disruption phenotype">
    <text evidence="3">Insertion mutant shows decreased efficiency of biofilm formation. Disruption affects swarming motility.</text>
</comment>
<comment type="similarity">
    <text evidence="6">Belongs to the transferase hexapeptide repeat family.</text>
</comment>
<gene>
    <name evidence="5" type="primary">epsM</name>
    <name type="synonym">yvfD</name>
    <name type="ordered locus">BSU34240</name>
</gene>
<protein>
    <recommendedName>
        <fullName evidence="6">UDP-N-acetylbacillosamine N-acetyltransferase</fullName>
        <ecNumber evidence="4">2.3.1.203</ecNumber>
    </recommendedName>
</protein>
<proteinExistence type="evidence at protein level"/>
<evidence type="ECO:0000250" key="1">
    <source>
        <dbReference type="UniProtKB" id="Q0P9D1"/>
    </source>
</evidence>
<evidence type="ECO:0000269" key="2">
    <source>
    </source>
</evidence>
<evidence type="ECO:0000269" key="3">
    <source>
    </source>
</evidence>
<evidence type="ECO:0000269" key="4">
    <source>
    </source>
</evidence>
<evidence type="ECO:0000303" key="5">
    <source>
    </source>
</evidence>
<evidence type="ECO:0000305" key="6"/>
<feature type="chain" id="PRO_0000360686" description="UDP-N-acetylbacillosamine N-acetyltransferase">
    <location>
        <begin position="1"/>
        <end position="216"/>
    </location>
</feature>
<feature type="active site" description="Proton acceptor" evidence="1">
    <location>
        <position position="137"/>
    </location>
</feature>
<feature type="binding site" evidence="1">
    <location>
        <position position="146"/>
    </location>
    <ligand>
        <name>acetyl-CoA</name>
        <dbReference type="ChEBI" id="CHEBI:57288"/>
    </ligand>
</feature>
<feature type="mutagenesis site" description="Loss of activity. Affects the oligomeric state." evidence="4">
    <original>H</original>
    <variation>L</variation>
    <location>
        <position position="146"/>
    </location>
</feature>
<organism>
    <name type="scientific">Bacillus subtilis (strain 168)</name>
    <dbReference type="NCBI Taxonomy" id="224308"/>
    <lineage>
        <taxon>Bacteria</taxon>
        <taxon>Bacillati</taxon>
        <taxon>Bacillota</taxon>
        <taxon>Bacilli</taxon>
        <taxon>Bacillales</taxon>
        <taxon>Bacillaceae</taxon>
        <taxon>Bacillus</taxon>
    </lineage>
</organism>
<accession>P71063</accession>
<accession>O08181</accession>
<accession>Q795J2</accession>
<dbReference type="EC" id="2.3.1.203" evidence="4"/>
<dbReference type="EMBL" id="Z71928">
    <property type="protein sequence ID" value="CAA96481.1"/>
    <property type="molecule type" value="Genomic_DNA"/>
</dbReference>
<dbReference type="EMBL" id="Z94043">
    <property type="protein sequence ID" value="CAB07997.1"/>
    <property type="molecule type" value="Genomic_DNA"/>
</dbReference>
<dbReference type="EMBL" id="AL009126">
    <property type="protein sequence ID" value="CAB15429.1"/>
    <property type="molecule type" value="Genomic_DNA"/>
</dbReference>
<dbReference type="PIR" id="E70037">
    <property type="entry name" value="E70037"/>
</dbReference>
<dbReference type="RefSeq" id="NP_391304.1">
    <property type="nucleotide sequence ID" value="NC_000964.3"/>
</dbReference>
<dbReference type="RefSeq" id="WP_003228268.1">
    <property type="nucleotide sequence ID" value="NZ_OZ025638.1"/>
</dbReference>
<dbReference type="SMR" id="P71063"/>
<dbReference type="FunCoup" id="P71063">
    <property type="interactions" value="35"/>
</dbReference>
<dbReference type="STRING" id="224308.BSU34240"/>
<dbReference type="PaxDb" id="224308-BSU34240"/>
<dbReference type="EnsemblBacteria" id="CAB15429">
    <property type="protein sequence ID" value="CAB15429"/>
    <property type="gene ID" value="BSU_34240"/>
</dbReference>
<dbReference type="GeneID" id="936372"/>
<dbReference type="KEGG" id="bsu:BSU34240"/>
<dbReference type="PATRIC" id="fig|224308.179.peg.3711"/>
<dbReference type="eggNOG" id="COG0110">
    <property type="taxonomic scope" value="Bacteria"/>
</dbReference>
<dbReference type="InParanoid" id="P71063"/>
<dbReference type="OrthoDB" id="9794407at2"/>
<dbReference type="PhylomeDB" id="P71063"/>
<dbReference type="BioCyc" id="BSUB:BSU34240-MONOMER"/>
<dbReference type="SABIO-RK" id="P71063"/>
<dbReference type="Proteomes" id="UP000001570">
    <property type="component" value="Chromosome"/>
</dbReference>
<dbReference type="GO" id="GO:0016746">
    <property type="term" value="F:acyltransferase activity"/>
    <property type="evidence" value="ECO:0007669"/>
    <property type="project" value="UniProtKB-KW"/>
</dbReference>
<dbReference type="CDD" id="cd03360">
    <property type="entry name" value="LbH_AT_putative"/>
    <property type="match status" value="1"/>
</dbReference>
<dbReference type="Gene3D" id="3.40.50.20">
    <property type="match status" value="1"/>
</dbReference>
<dbReference type="Gene3D" id="2.160.10.10">
    <property type="entry name" value="Hexapeptide repeat proteins"/>
    <property type="match status" value="1"/>
</dbReference>
<dbReference type="InterPro" id="IPR020019">
    <property type="entry name" value="AcTrfase_PglD-like"/>
</dbReference>
<dbReference type="InterPro" id="IPR001451">
    <property type="entry name" value="Hexapep"/>
</dbReference>
<dbReference type="InterPro" id="IPR018357">
    <property type="entry name" value="Hexapep_transf_CS"/>
</dbReference>
<dbReference type="InterPro" id="IPR041561">
    <property type="entry name" value="PglD_N"/>
</dbReference>
<dbReference type="InterPro" id="IPR050179">
    <property type="entry name" value="Trans_hexapeptide_repeat"/>
</dbReference>
<dbReference type="InterPro" id="IPR011004">
    <property type="entry name" value="Trimer_LpxA-like_sf"/>
</dbReference>
<dbReference type="NCBIfam" id="TIGR03570">
    <property type="entry name" value="NeuD_NnaD"/>
    <property type="match status" value="1"/>
</dbReference>
<dbReference type="PANTHER" id="PTHR43300">
    <property type="entry name" value="ACETYLTRANSFERASE"/>
    <property type="match status" value="1"/>
</dbReference>
<dbReference type="PANTHER" id="PTHR43300:SF7">
    <property type="entry name" value="UDP-N-ACETYLBACILLOSAMINE N-ACETYLTRANSFERASE"/>
    <property type="match status" value="1"/>
</dbReference>
<dbReference type="Pfam" id="PF00132">
    <property type="entry name" value="Hexapep"/>
    <property type="match status" value="1"/>
</dbReference>
<dbReference type="Pfam" id="PF17836">
    <property type="entry name" value="PglD_N"/>
    <property type="match status" value="1"/>
</dbReference>
<dbReference type="SUPFAM" id="SSF51161">
    <property type="entry name" value="Trimeric LpxA-like enzymes"/>
    <property type="match status" value="1"/>
</dbReference>
<dbReference type="PROSITE" id="PS00101">
    <property type="entry name" value="HEXAPEP_TRANSFERASES"/>
    <property type="match status" value="1"/>
</dbReference>
<reference key="1">
    <citation type="journal article" date="1996" name="Microbiology">
        <title>Integrated mapping and sequencing of a 115 kb DNA fragment from Bacillus subtilis: sequence analysis of a 21 kb segment containing the sigL locus.</title>
        <authorList>
            <person name="Fabret C."/>
            <person name="Quentin Y."/>
            <person name="Chapal N."/>
            <person name="Guiseppi A."/>
            <person name="Haiech J."/>
            <person name="Denizot F."/>
        </authorList>
    </citation>
    <scope>NUCLEOTIDE SEQUENCE [GENOMIC DNA]</scope>
    <source>
        <strain>168</strain>
    </source>
</reference>
<reference key="2">
    <citation type="submission" date="1997-04" db="EMBL/GenBank/DDBJ databases">
        <authorList>
            <person name="Denizot F."/>
        </authorList>
    </citation>
    <scope>NUCLEOTIDE SEQUENCE [GENOMIC DNA]</scope>
    <source>
        <strain>168</strain>
    </source>
</reference>
<reference key="3">
    <citation type="journal article" date="1997" name="Nature">
        <title>The complete genome sequence of the Gram-positive bacterium Bacillus subtilis.</title>
        <authorList>
            <person name="Kunst F."/>
            <person name="Ogasawara N."/>
            <person name="Moszer I."/>
            <person name="Albertini A.M."/>
            <person name="Alloni G."/>
            <person name="Azevedo V."/>
            <person name="Bertero M.G."/>
            <person name="Bessieres P."/>
            <person name="Bolotin A."/>
            <person name="Borchert S."/>
            <person name="Borriss R."/>
            <person name="Boursier L."/>
            <person name="Brans A."/>
            <person name="Braun M."/>
            <person name="Brignell S.C."/>
            <person name="Bron S."/>
            <person name="Brouillet S."/>
            <person name="Bruschi C.V."/>
            <person name="Caldwell B."/>
            <person name="Capuano V."/>
            <person name="Carter N.M."/>
            <person name="Choi S.-K."/>
            <person name="Codani J.-J."/>
            <person name="Connerton I.F."/>
            <person name="Cummings N.J."/>
            <person name="Daniel R.A."/>
            <person name="Denizot F."/>
            <person name="Devine K.M."/>
            <person name="Duesterhoeft A."/>
            <person name="Ehrlich S.D."/>
            <person name="Emmerson P.T."/>
            <person name="Entian K.-D."/>
            <person name="Errington J."/>
            <person name="Fabret C."/>
            <person name="Ferrari E."/>
            <person name="Foulger D."/>
            <person name="Fritz C."/>
            <person name="Fujita M."/>
            <person name="Fujita Y."/>
            <person name="Fuma S."/>
            <person name="Galizzi A."/>
            <person name="Galleron N."/>
            <person name="Ghim S.-Y."/>
            <person name="Glaser P."/>
            <person name="Goffeau A."/>
            <person name="Golightly E.J."/>
            <person name="Grandi G."/>
            <person name="Guiseppi G."/>
            <person name="Guy B.J."/>
            <person name="Haga K."/>
            <person name="Haiech J."/>
            <person name="Harwood C.R."/>
            <person name="Henaut A."/>
            <person name="Hilbert H."/>
            <person name="Holsappel S."/>
            <person name="Hosono S."/>
            <person name="Hullo M.-F."/>
            <person name="Itaya M."/>
            <person name="Jones L.-M."/>
            <person name="Joris B."/>
            <person name="Karamata D."/>
            <person name="Kasahara Y."/>
            <person name="Klaerr-Blanchard M."/>
            <person name="Klein C."/>
            <person name="Kobayashi Y."/>
            <person name="Koetter P."/>
            <person name="Koningstein G."/>
            <person name="Krogh S."/>
            <person name="Kumano M."/>
            <person name="Kurita K."/>
            <person name="Lapidus A."/>
            <person name="Lardinois S."/>
            <person name="Lauber J."/>
            <person name="Lazarevic V."/>
            <person name="Lee S.-M."/>
            <person name="Levine A."/>
            <person name="Liu H."/>
            <person name="Masuda S."/>
            <person name="Mauel C."/>
            <person name="Medigue C."/>
            <person name="Medina N."/>
            <person name="Mellado R.P."/>
            <person name="Mizuno M."/>
            <person name="Moestl D."/>
            <person name="Nakai S."/>
            <person name="Noback M."/>
            <person name="Noone D."/>
            <person name="O'Reilly M."/>
            <person name="Ogawa K."/>
            <person name="Ogiwara A."/>
            <person name="Oudega B."/>
            <person name="Park S.-H."/>
            <person name="Parro V."/>
            <person name="Pohl T.M."/>
            <person name="Portetelle D."/>
            <person name="Porwollik S."/>
            <person name="Prescott A.M."/>
            <person name="Presecan E."/>
            <person name="Pujic P."/>
            <person name="Purnelle B."/>
            <person name="Rapoport G."/>
            <person name="Rey M."/>
            <person name="Reynolds S."/>
            <person name="Rieger M."/>
            <person name="Rivolta C."/>
            <person name="Rocha E."/>
            <person name="Roche B."/>
            <person name="Rose M."/>
            <person name="Sadaie Y."/>
            <person name="Sato T."/>
            <person name="Scanlan E."/>
            <person name="Schleich S."/>
            <person name="Schroeter R."/>
            <person name="Scoffone F."/>
            <person name="Sekiguchi J."/>
            <person name="Sekowska A."/>
            <person name="Seror S.J."/>
            <person name="Serror P."/>
            <person name="Shin B.-S."/>
            <person name="Soldo B."/>
            <person name="Sorokin A."/>
            <person name="Tacconi E."/>
            <person name="Takagi T."/>
            <person name="Takahashi H."/>
            <person name="Takemaru K."/>
            <person name="Takeuchi M."/>
            <person name="Tamakoshi A."/>
            <person name="Tanaka T."/>
            <person name="Terpstra P."/>
            <person name="Tognoni A."/>
            <person name="Tosato V."/>
            <person name="Uchiyama S."/>
            <person name="Vandenbol M."/>
            <person name="Vannier F."/>
            <person name="Vassarotti A."/>
            <person name="Viari A."/>
            <person name="Wambutt R."/>
            <person name="Wedler E."/>
            <person name="Wedler H."/>
            <person name="Weitzenegger T."/>
            <person name="Winters P."/>
            <person name="Wipat A."/>
            <person name="Yamamoto H."/>
            <person name="Yamane K."/>
            <person name="Yasumoto K."/>
            <person name="Yata K."/>
            <person name="Yoshida K."/>
            <person name="Yoshikawa H.-F."/>
            <person name="Zumstein E."/>
            <person name="Yoshikawa H."/>
            <person name="Danchin A."/>
        </authorList>
    </citation>
    <scope>NUCLEOTIDE SEQUENCE [LARGE SCALE GENOMIC DNA]</scope>
    <source>
        <strain>168</strain>
    </source>
</reference>
<reference key="4">
    <citation type="journal article" date="2005" name="Mol. Microbiol.">
        <title>A master regulator for biofilm formation by Bacillus subtilis.</title>
        <authorList>
            <person name="Kearns D.B."/>
            <person name="Chu F."/>
            <person name="Branda S.S."/>
            <person name="Kolter R."/>
            <person name="Losick R."/>
        </authorList>
    </citation>
    <scope>INDUCTION</scope>
</reference>
<reference key="5">
    <citation type="journal article" date="2010" name="J. Appl. Genet.">
        <title>Importance of eps genes from Bacillus subtilis in biofilm formation and swarming.</title>
        <authorList>
            <person name="Nagorska K."/>
            <person name="Ostrowski A."/>
            <person name="Hinc K."/>
            <person name="Holland I.B."/>
            <person name="Obuchowski M."/>
        </authorList>
    </citation>
    <scope>DISRUPTION PHENOTYPE</scope>
</reference>
<reference key="6">
    <citation type="journal article" date="2018" name="Biochem. Biophys. Res. Commun.">
        <title>EpsM from Bacillus subtilis 168 has UDP-2,4,6-trideoxy-2-acetamido-4-amino glucose acetyltransferase activity in vitro.</title>
        <authorList>
            <person name="Kaundinya C.R."/>
            <person name="Savithri H.S."/>
            <person name="Rao K.K."/>
            <person name="Balaji P.V."/>
        </authorList>
    </citation>
    <scope>FUNCTION</scope>
    <scope>CATALYTIC ACTIVITY</scope>
    <scope>BIOPHYSICOCHEMICAL PROPERTIES</scope>
    <scope>SUBUNIT</scope>
    <scope>MUTAGENESIS OF HIS-146</scope>
    <source>
        <strain>168</strain>
    </source>
</reference>
<name>EPSM_BACSU</name>
<keyword id="KW-0012">Acyltransferase</keyword>
<keyword id="KW-1185">Reference proteome</keyword>
<keyword id="KW-0677">Repeat</keyword>
<keyword id="KW-0808">Transferase</keyword>